<organism>
    <name type="scientific">Oryza sativa subsp. japonica</name>
    <name type="common">Rice</name>
    <dbReference type="NCBI Taxonomy" id="39947"/>
    <lineage>
        <taxon>Eukaryota</taxon>
        <taxon>Viridiplantae</taxon>
        <taxon>Streptophyta</taxon>
        <taxon>Embryophyta</taxon>
        <taxon>Tracheophyta</taxon>
        <taxon>Spermatophyta</taxon>
        <taxon>Magnoliopsida</taxon>
        <taxon>Liliopsida</taxon>
        <taxon>Poales</taxon>
        <taxon>Poaceae</taxon>
        <taxon>BOP clade</taxon>
        <taxon>Oryzoideae</taxon>
        <taxon>Oryzeae</taxon>
        <taxon>Oryzinae</taxon>
        <taxon>Oryza</taxon>
        <taxon>Oryza sativa</taxon>
    </lineage>
</organism>
<feature type="chain" id="PRO_0000378441" description="Protein argonaute 18">
    <location>
        <begin position="1"/>
        <end position="1088"/>
    </location>
</feature>
<feature type="domain" description="PAZ" evidence="2">
    <location>
        <begin position="477"/>
        <end position="574"/>
    </location>
</feature>
<feature type="domain" description="Piwi" evidence="3">
    <location>
        <begin position="747"/>
        <end position="1056"/>
    </location>
</feature>
<feature type="region of interest" description="Disordered" evidence="4">
    <location>
        <begin position="1"/>
        <end position="220"/>
    </location>
</feature>
<feature type="compositionally biased region" description="Gly residues" evidence="4">
    <location>
        <begin position="20"/>
        <end position="30"/>
    </location>
</feature>
<feature type="compositionally biased region" description="Gly residues" evidence="4">
    <location>
        <begin position="51"/>
        <end position="86"/>
    </location>
</feature>
<feature type="compositionally biased region" description="Gly residues" evidence="4">
    <location>
        <begin position="95"/>
        <end position="127"/>
    </location>
</feature>
<feature type="compositionally biased region" description="Gly residues" evidence="4">
    <location>
        <begin position="135"/>
        <end position="148"/>
    </location>
</feature>
<feature type="compositionally biased region" description="Gly residues" evidence="4">
    <location>
        <begin position="161"/>
        <end position="182"/>
    </location>
</feature>
<feature type="compositionally biased region" description="Gly residues" evidence="4">
    <location>
        <begin position="191"/>
        <end position="206"/>
    </location>
</feature>
<feature type="compositionally biased region" description="Pro residues" evidence="4">
    <location>
        <begin position="211"/>
        <end position="220"/>
    </location>
</feature>
<feature type="sequence conflict" description="In Ref. 4; AK069685." evidence="5" ref="4">
    <original>R</original>
    <variation>S</variation>
    <location>
        <position position="511"/>
    </location>
</feature>
<feature type="sequence conflict" description="In Ref. 4; AK069685." evidence="5" ref="4">
    <original>V</original>
    <variation>A</variation>
    <location>
        <position position="587"/>
    </location>
</feature>
<gene>
    <name type="primary">AGO18</name>
    <name type="ordered locus">Os07g0471300</name>
    <name type="ordered locus">LOC_Os07g28850</name>
    <name type="ORF">OJ1103_E04.115</name>
    <name type="ORF">P0675B10.105</name>
</gene>
<evidence type="ECO:0000250" key="1"/>
<evidence type="ECO:0000255" key="2">
    <source>
        <dbReference type="PROSITE-ProRule" id="PRU00142"/>
    </source>
</evidence>
<evidence type="ECO:0000255" key="3">
    <source>
        <dbReference type="PROSITE-ProRule" id="PRU00150"/>
    </source>
</evidence>
<evidence type="ECO:0000256" key="4">
    <source>
        <dbReference type="SAM" id="MobiDB-lite"/>
    </source>
</evidence>
<evidence type="ECO:0000305" key="5"/>
<protein>
    <recommendedName>
        <fullName>Protein argonaute 18</fullName>
        <shortName>OsAGO18</shortName>
    </recommendedName>
</protein>
<comment type="function">
    <text evidence="1">Probably involved in the RNA silencing pathway. May bind to short RNAs such as microRNAs (miRNAs) or short interfering RNAs (siRNAs), and represses the translation of mRNAs which are complementary to them (By similarity).</text>
</comment>
<comment type="similarity">
    <text evidence="5">Belongs to the argonaute family. Ago subfamily.</text>
</comment>
<comment type="sequence caution" evidence="5">
    <conflict type="frameshift">
        <sequence resource="EMBL" id="AK069685"/>
    </conflict>
</comment>
<comment type="sequence caution" evidence="5">
    <conflict type="erroneous gene model prediction">
        <sequence resource="EMBL-CDS" id="BAF21523"/>
    </conflict>
</comment>
<accession>Q69UP6</accession>
<accession>Q0D6K0</accession>
<reference key="1">
    <citation type="journal article" date="2005" name="Nature">
        <title>The map-based sequence of the rice genome.</title>
        <authorList>
            <consortium name="International rice genome sequencing project (IRGSP)"/>
        </authorList>
    </citation>
    <scope>NUCLEOTIDE SEQUENCE [LARGE SCALE GENOMIC DNA]</scope>
    <source>
        <strain>cv. Nipponbare</strain>
    </source>
</reference>
<reference key="2">
    <citation type="journal article" date="2008" name="Nucleic Acids Res.">
        <title>The rice annotation project database (RAP-DB): 2008 update.</title>
        <authorList>
            <consortium name="The rice annotation project (RAP)"/>
        </authorList>
    </citation>
    <scope>GENOME REANNOTATION</scope>
    <source>
        <strain>cv. Nipponbare</strain>
    </source>
</reference>
<reference key="3">
    <citation type="journal article" date="2013" name="Rice">
        <title>Improvement of the Oryza sativa Nipponbare reference genome using next generation sequence and optical map data.</title>
        <authorList>
            <person name="Kawahara Y."/>
            <person name="de la Bastide M."/>
            <person name="Hamilton J.P."/>
            <person name="Kanamori H."/>
            <person name="McCombie W.R."/>
            <person name="Ouyang S."/>
            <person name="Schwartz D.C."/>
            <person name="Tanaka T."/>
            <person name="Wu J."/>
            <person name="Zhou S."/>
            <person name="Childs K.L."/>
            <person name="Davidson R.M."/>
            <person name="Lin H."/>
            <person name="Quesada-Ocampo L."/>
            <person name="Vaillancourt B."/>
            <person name="Sakai H."/>
            <person name="Lee S.S."/>
            <person name="Kim J."/>
            <person name="Numa H."/>
            <person name="Itoh T."/>
            <person name="Buell C.R."/>
            <person name="Matsumoto T."/>
        </authorList>
    </citation>
    <scope>GENOME REANNOTATION</scope>
    <source>
        <strain>cv. Nipponbare</strain>
    </source>
</reference>
<reference key="4">
    <citation type="journal article" date="2003" name="Science">
        <title>Collection, mapping, and annotation of over 28,000 cDNA clones from japonica rice.</title>
        <authorList>
            <consortium name="The rice full-length cDNA consortium"/>
        </authorList>
    </citation>
    <scope>NUCLEOTIDE SEQUENCE [LARGE SCALE MRNA] OF 346-1088</scope>
    <source>
        <strain>cv. Nipponbare</strain>
    </source>
</reference>
<reference key="5">
    <citation type="journal article" date="2008" name="BMC Genomics">
        <title>Genome-wide identification, organization and phylogenetic analysis of dicer-like, argonaute and RNA-dependent RNA polymerase gene families and their expression analysis during reproductive development and stress in rice.</title>
        <authorList>
            <person name="Kapoor M."/>
            <person name="Arora R."/>
            <person name="Lama T."/>
            <person name="Nijhawan A."/>
            <person name="Khurana J.P."/>
            <person name="Tyagi A.K."/>
            <person name="Kapoor S."/>
        </authorList>
    </citation>
    <scope>GENE FAMILY</scope>
    <scope>NOMENCLATURE</scope>
</reference>
<keyword id="KW-1185">Reference proteome</keyword>
<keyword id="KW-0943">RNA-mediated gene silencing</keyword>
<proteinExistence type="evidence at transcript level"/>
<dbReference type="EMBL" id="AP003806">
    <property type="protein sequence ID" value="BAD30270.1"/>
    <property type="molecule type" value="Genomic_DNA"/>
</dbReference>
<dbReference type="EMBL" id="AP004347">
    <property type="protein sequence ID" value="BAD30662.1"/>
    <property type="molecule type" value="Genomic_DNA"/>
</dbReference>
<dbReference type="EMBL" id="AP008213">
    <property type="protein sequence ID" value="BAF21523.2"/>
    <property type="status" value="ALT_SEQ"/>
    <property type="molecule type" value="Genomic_DNA"/>
</dbReference>
<dbReference type="EMBL" id="AP014963">
    <property type="status" value="NOT_ANNOTATED_CDS"/>
    <property type="molecule type" value="Genomic_DNA"/>
</dbReference>
<dbReference type="EMBL" id="AK069685">
    <property type="status" value="NOT_ANNOTATED_CDS"/>
    <property type="molecule type" value="mRNA"/>
</dbReference>
<dbReference type="SMR" id="Q69UP6"/>
<dbReference type="FunCoup" id="Q69UP6">
    <property type="interactions" value="1898"/>
</dbReference>
<dbReference type="STRING" id="39947.Q69UP6"/>
<dbReference type="PaxDb" id="39947-Q69UP6"/>
<dbReference type="EnsemblPlants" id="Os07t0471300-01">
    <property type="protein sequence ID" value="Os07t0471300-01"/>
    <property type="gene ID" value="Os07g0471300"/>
</dbReference>
<dbReference type="Gramene" id="Os07t0471300-01">
    <property type="protein sequence ID" value="Os07t0471300-01"/>
    <property type="gene ID" value="Os07g0471300"/>
</dbReference>
<dbReference type="KEGG" id="dosa:Os07g0471300"/>
<dbReference type="eggNOG" id="KOG1041">
    <property type="taxonomic scope" value="Eukaryota"/>
</dbReference>
<dbReference type="HOGENOM" id="CLU_004544_4_3_1"/>
<dbReference type="InParanoid" id="Q69UP6"/>
<dbReference type="OrthoDB" id="10252740at2759"/>
<dbReference type="Proteomes" id="UP000000763">
    <property type="component" value="Chromosome 7"/>
</dbReference>
<dbReference type="Proteomes" id="UP000059680">
    <property type="component" value="Chromosome 7"/>
</dbReference>
<dbReference type="GO" id="GO:0005737">
    <property type="term" value="C:cytoplasm"/>
    <property type="evidence" value="ECO:0000318"/>
    <property type="project" value="GO_Central"/>
</dbReference>
<dbReference type="GO" id="GO:0005634">
    <property type="term" value="C:nucleus"/>
    <property type="evidence" value="ECO:0000318"/>
    <property type="project" value="GO_Central"/>
</dbReference>
<dbReference type="GO" id="GO:0003723">
    <property type="term" value="F:RNA binding"/>
    <property type="evidence" value="ECO:0000318"/>
    <property type="project" value="GO_Central"/>
</dbReference>
<dbReference type="GO" id="GO:0004521">
    <property type="term" value="F:RNA endonuclease activity"/>
    <property type="evidence" value="ECO:0000318"/>
    <property type="project" value="GO_Central"/>
</dbReference>
<dbReference type="GO" id="GO:0031047">
    <property type="term" value="P:regulatory ncRNA-mediated gene silencing"/>
    <property type="evidence" value="ECO:0000318"/>
    <property type="project" value="GO_Central"/>
</dbReference>
<dbReference type="CDD" id="cd02846">
    <property type="entry name" value="PAZ_argonaute_like"/>
    <property type="match status" value="1"/>
</dbReference>
<dbReference type="CDD" id="cd04657">
    <property type="entry name" value="Piwi_ago-like"/>
    <property type="match status" value="1"/>
</dbReference>
<dbReference type="FunFam" id="3.40.50.2300:FF:000110">
    <property type="entry name" value="Argonaute 10"/>
    <property type="match status" value="1"/>
</dbReference>
<dbReference type="Gene3D" id="3.40.50.2300">
    <property type="match status" value="1"/>
</dbReference>
<dbReference type="Gene3D" id="2.170.260.10">
    <property type="entry name" value="paz domain"/>
    <property type="match status" value="1"/>
</dbReference>
<dbReference type="Gene3D" id="3.30.420.10">
    <property type="entry name" value="Ribonuclease H-like superfamily/Ribonuclease H"/>
    <property type="match status" value="1"/>
</dbReference>
<dbReference type="InterPro" id="IPR014811">
    <property type="entry name" value="ArgoL1"/>
</dbReference>
<dbReference type="InterPro" id="IPR032472">
    <property type="entry name" value="ArgoL2"/>
</dbReference>
<dbReference type="InterPro" id="IPR032473">
    <property type="entry name" value="Argonaute_Mid_dom"/>
</dbReference>
<dbReference type="InterPro" id="IPR032474">
    <property type="entry name" value="Argonaute_N"/>
</dbReference>
<dbReference type="InterPro" id="IPR003100">
    <property type="entry name" value="PAZ_dom"/>
</dbReference>
<dbReference type="InterPro" id="IPR036085">
    <property type="entry name" value="PAZ_dom_sf"/>
</dbReference>
<dbReference type="InterPro" id="IPR003165">
    <property type="entry name" value="Piwi"/>
</dbReference>
<dbReference type="InterPro" id="IPR045246">
    <property type="entry name" value="Piwi_ago-like"/>
</dbReference>
<dbReference type="InterPro" id="IPR012337">
    <property type="entry name" value="RNaseH-like_sf"/>
</dbReference>
<dbReference type="InterPro" id="IPR036397">
    <property type="entry name" value="RNaseH_sf"/>
</dbReference>
<dbReference type="PANTHER" id="PTHR22891">
    <property type="entry name" value="EUKARYOTIC TRANSLATION INITIATION FACTOR 2C"/>
    <property type="match status" value="1"/>
</dbReference>
<dbReference type="Pfam" id="PF08699">
    <property type="entry name" value="ArgoL1"/>
    <property type="match status" value="1"/>
</dbReference>
<dbReference type="Pfam" id="PF16488">
    <property type="entry name" value="ArgoL2"/>
    <property type="match status" value="1"/>
</dbReference>
<dbReference type="Pfam" id="PF16487">
    <property type="entry name" value="ArgoMid"/>
    <property type="match status" value="1"/>
</dbReference>
<dbReference type="Pfam" id="PF16486">
    <property type="entry name" value="ArgoN"/>
    <property type="match status" value="1"/>
</dbReference>
<dbReference type="Pfam" id="PF02170">
    <property type="entry name" value="PAZ"/>
    <property type="match status" value="1"/>
</dbReference>
<dbReference type="Pfam" id="PF02171">
    <property type="entry name" value="Piwi"/>
    <property type="match status" value="1"/>
</dbReference>
<dbReference type="PRINTS" id="PR01228">
    <property type="entry name" value="EGGSHELL"/>
</dbReference>
<dbReference type="SMART" id="SM01163">
    <property type="entry name" value="DUF1785"/>
    <property type="match status" value="1"/>
</dbReference>
<dbReference type="SMART" id="SM00949">
    <property type="entry name" value="PAZ"/>
    <property type="match status" value="1"/>
</dbReference>
<dbReference type="SMART" id="SM00950">
    <property type="entry name" value="Piwi"/>
    <property type="match status" value="1"/>
</dbReference>
<dbReference type="SUPFAM" id="SSF101690">
    <property type="entry name" value="PAZ domain"/>
    <property type="match status" value="1"/>
</dbReference>
<dbReference type="SUPFAM" id="SSF53098">
    <property type="entry name" value="Ribonuclease H-like"/>
    <property type="match status" value="1"/>
</dbReference>
<dbReference type="PROSITE" id="PS50821">
    <property type="entry name" value="PAZ"/>
    <property type="match status" value="1"/>
</dbReference>
<dbReference type="PROSITE" id="PS50822">
    <property type="entry name" value="PIWI"/>
    <property type="match status" value="1"/>
</dbReference>
<name>AGO18_ORYSJ</name>
<sequence>MASRGGGQHQRHQQQQQQPGGYGRGGGGGRGRGRDGAPYSGGRGRGQDGSYPGGRGGGYGGGGGGGGPPYYGGGGGGGGGGGGQGRGYYDDGGDGRGYQRGMEGGGGRGGYRGDGDGGYGRGGGGYHGDGERGYGRGGGGGGGGGGGYRGDDEGRSSYGRARGGGGGGGGYHGDGEAGYGRGRGGRDYDGGRGGGGRRGGRGGGGSSYHQQPPPDLPQAPEPRLAAQYAREIDIAALRAQFKGLTTTTPGAASSQFPARPGFGAAGEECLVKVNHFFVGLKNDNFHHYDVAIAPDPVLKGLFRTIISKLVTERRHTDFGGRLPVYDGRANLYTAGELPFRSRELEVELSGSRKFKVAIRHVAPVSLQDLRMVMAGCPAGIPSQALQLLDIVLRDMVLAERNDMGYVAFGRSYFSPGLGSRELDKGIFAWKGFYQSCRVTQQGLSLNIDMSSTAFIEPGRVLNFVEKAIGRRITNAITVGYFLNNYGNELMRTLKGVKVEVTHRGNLRKKYRIAGFTEQSADVQTFTSSDGIKTVKEYFNKKYNLKLAFGYLPCLQVGSKERPNYLPMELCNIVPGQRYKNRLSPTQVSNLINITNDRPCDRESSIRQTVSSNQYNSTERADEFGIEVDSYPTTLKARVLKAPMLKYHDSGRVRVCTPEDGAWNMKDKKVVNGATIKSWACVNLCEGLDNRVVEAFCLQLVRTSKITGLDFANVSLPILKADPHNVKTDLPMRYQEACSWSRDNKIDLLLVVMTDDKNNASLYGDVKRICETEIGVLSQCCRAKQVYKERNVQYCANVALKINAKAGGRNSVFLNVEASLPVVSKSPTIIFGADVTHPGSFDESTPSIASVVASADWPEVTKYNSVVRMQASRKEIIQDLDSIVRELLNAFKRDSKMEPKQLIFYRDGVSEGQFQQVVESEIPEIEKAWKSLYAGKPRITFIVVQKRHHTRLFPNNYNDPRGMDGTGNVRPGTVVDTVICHPREFDFFLCSQAGIKGTSRPSHYHVLRDDNNFTADQLQSVTNNLCYLYTSCTRSVSIPPPVYYAHKLAFRARFYLTQVPVAGGDPGAAKFQWVLPEIKEEVKKSMFFC</sequence>